<name>PSBF_CYAPA</name>
<accession>P19153</accession>
<dbReference type="EMBL" id="M35129">
    <property type="protein sequence ID" value="AAA31696.1"/>
    <property type="molecule type" value="Genomic_DNA"/>
</dbReference>
<dbReference type="EMBL" id="U30821">
    <property type="protein sequence ID" value="AAA81210.1"/>
    <property type="molecule type" value="Genomic_DNA"/>
</dbReference>
<dbReference type="PIR" id="S09482">
    <property type="entry name" value="CBKT5F"/>
</dbReference>
<dbReference type="RefSeq" id="NP_043179.1">
    <property type="nucleotide sequence ID" value="NC_001675.1"/>
</dbReference>
<dbReference type="SMR" id="P19153"/>
<dbReference type="GeneID" id="801620"/>
<dbReference type="GO" id="GO:0033115">
    <property type="term" value="C:cyanelle thylakoid membrane"/>
    <property type="evidence" value="ECO:0007669"/>
    <property type="project" value="UniProtKB-SubCell"/>
</dbReference>
<dbReference type="GO" id="GO:0009539">
    <property type="term" value="C:photosystem II reaction center"/>
    <property type="evidence" value="ECO:0007669"/>
    <property type="project" value="InterPro"/>
</dbReference>
<dbReference type="GO" id="GO:0009055">
    <property type="term" value="F:electron transfer activity"/>
    <property type="evidence" value="ECO:0007669"/>
    <property type="project" value="UniProtKB-UniRule"/>
</dbReference>
<dbReference type="GO" id="GO:0020037">
    <property type="term" value="F:heme binding"/>
    <property type="evidence" value="ECO:0007669"/>
    <property type="project" value="InterPro"/>
</dbReference>
<dbReference type="GO" id="GO:0005506">
    <property type="term" value="F:iron ion binding"/>
    <property type="evidence" value="ECO:0007669"/>
    <property type="project" value="UniProtKB-UniRule"/>
</dbReference>
<dbReference type="GO" id="GO:0009767">
    <property type="term" value="P:photosynthetic electron transport chain"/>
    <property type="evidence" value="ECO:0007669"/>
    <property type="project" value="InterPro"/>
</dbReference>
<dbReference type="HAMAP" id="MF_00643">
    <property type="entry name" value="PSII_PsbF"/>
    <property type="match status" value="1"/>
</dbReference>
<dbReference type="InterPro" id="IPR006241">
    <property type="entry name" value="PSII_cyt_b559_bsu"/>
</dbReference>
<dbReference type="InterPro" id="IPR006216">
    <property type="entry name" value="PSII_cyt_b559_CS"/>
</dbReference>
<dbReference type="InterPro" id="IPR013081">
    <property type="entry name" value="PSII_cyt_b559_N"/>
</dbReference>
<dbReference type="NCBIfam" id="TIGR01333">
    <property type="entry name" value="cyt_b559_beta"/>
    <property type="match status" value="1"/>
</dbReference>
<dbReference type="Pfam" id="PF00283">
    <property type="entry name" value="Cytochrom_B559"/>
    <property type="match status" value="1"/>
</dbReference>
<dbReference type="PIRSF" id="PIRSF000037">
    <property type="entry name" value="PsbF"/>
    <property type="match status" value="1"/>
</dbReference>
<dbReference type="SUPFAM" id="SSF161045">
    <property type="entry name" value="Cytochrome b559 subunits"/>
    <property type="match status" value="1"/>
</dbReference>
<dbReference type="PROSITE" id="PS00537">
    <property type="entry name" value="CYTOCHROME_B559"/>
    <property type="match status" value="1"/>
</dbReference>
<geneLocation type="cyanelle"/>
<keyword id="KW-0194">Cyanelle</keyword>
<keyword id="KW-0249">Electron transport</keyword>
<keyword id="KW-0349">Heme</keyword>
<keyword id="KW-0408">Iron</keyword>
<keyword id="KW-0472">Membrane</keyword>
<keyword id="KW-0479">Metal-binding</keyword>
<keyword id="KW-0602">Photosynthesis</keyword>
<keyword id="KW-0604">Photosystem II</keyword>
<keyword id="KW-0934">Plastid</keyword>
<keyword id="KW-0793">Thylakoid</keyword>
<keyword id="KW-0812">Transmembrane</keyword>
<keyword id="KW-1133">Transmembrane helix</keyword>
<keyword id="KW-0813">Transport</keyword>
<sequence length="42" mass="4761">MNNPNQPVSYPIFTVRWLAIHAIGIPAVFFIGSITAMQFIQR</sequence>
<gene>
    <name evidence="1" type="primary">psbF</name>
</gene>
<evidence type="ECO:0000255" key="1">
    <source>
        <dbReference type="HAMAP-Rule" id="MF_00643"/>
    </source>
</evidence>
<proteinExistence type="inferred from homology"/>
<reference key="1">
    <citation type="journal article" date="1988" name="Photosyn. Res.">
        <title>Nucleotide sequence of the genes encoding cytochrome b-559 from the cyanelle genome of Cyanophora paradoxa.</title>
        <authorList>
            <person name="Cantrell A."/>
            <person name="Bryant D.A."/>
        </authorList>
    </citation>
    <scope>NUCLEOTIDE SEQUENCE [GENOMIC DNA]</scope>
    <source>
        <strain>UTEX LB 555 / Pringsheim</strain>
    </source>
</reference>
<reference key="2">
    <citation type="journal article" date="1987" name="Prog. Photosyn. Res.">
        <title>Molecular cloning and nucleotide sequences of the genes encoding cytochrome B-559 from the cyanelle genome of Cyanophora paradoxa.</title>
        <authorList>
            <person name="Cantrell A."/>
            <person name="Bryant D.A."/>
        </authorList>
    </citation>
    <scope>NUCLEOTIDE SEQUENCE [GENOMIC DNA]</scope>
    <source>
        <strain>UTEX LB 555 / Pringsheim</strain>
    </source>
</reference>
<reference key="3">
    <citation type="journal article" date="1995" name="Plant Mol. Biol. Rep.">
        <title>Nucleotide sequence of the cyanelle DNA from Cyanophora paradoxa.</title>
        <authorList>
            <person name="Stirewalt V.L."/>
            <person name="Michalowski C.B."/>
            <person name="Loeffelhardt W."/>
            <person name="Bohnert H.J."/>
            <person name="Bryant D.A."/>
        </authorList>
    </citation>
    <scope>NUCLEOTIDE SEQUENCE [LARGE SCALE GENOMIC DNA]</scope>
    <source>
        <strain>UTEX LB 555 / Pringsheim</strain>
    </source>
</reference>
<reference key="4">
    <citation type="book" date="1997" name="Eukaryotism and symbiosis">
        <title>The complete sequence of the cyanelle genome of Cyanophora paradoxa: the genetic complexity of a primitive plastid.</title>
        <editorList>
            <person name="Schenk H.E.A."/>
            <person name="Herrmann R."/>
            <person name="Jeon K.W."/>
            <person name="Mueller N.E."/>
            <person name="Schwemmler W."/>
        </editorList>
        <authorList>
            <person name="Loeffelhardt W."/>
            <person name="Stirewalt V.L."/>
            <person name="Michalowski C.B."/>
            <person name="Annarella M."/>
            <person name="Farley J.Y."/>
            <person name="Schluchter W.M."/>
            <person name="Chung S."/>
            <person name="Newmann-Spallart C."/>
            <person name="Steiner J.M."/>
            <person name="Jakowitsch J."/>
            <person name="Bohnert H.J."/>
            <person name="Bryant D.A."/>
        </authorList>
    </citation>
    <scope>NUCLEOTIDE SEQUENCE [LARGE SCALE GENOMIC DNA]</scope>
    <source>
        <strain>UTEX LB 555 / Pringsheim</strain>
    </source>
</reference>
<protein>
    <recommendedName>
        <fullName evidence="1">Cytochrome b559 subunit beta</fullName>
    </recommendedName>
    <alternativeName>
        <fullName evidence="1">PSII reaction center subunit VI</fullName>
    </alternativeName>
</protein>
<organism>
    <name type="scientific">Cyanophora paradoxa</name>
    <dbReference type="NCBI Taxonomy" id="2762"/>
    <lineage>
        <taxon>Eukaryota</taxon>
        <taxon>Glaucocystophyceae</taxon>
        <taxon>Cyanophoraceae</taxon>
        <taxon>Cyanophora</taxon>
    </lineage>
</organism>
<feature type="chain" id="PRO_0000200385" description="Cytochrome b559 subunit beta">
    <location>
        <begin position="1"/>
        <end position="42"/>
    </location>
</feature>
<feature type="transmembrane region" description="Helical" evidence="1">
    <location>
        <begin position="17"/>
        <end position="33"/>
    </location>
</feature>
<feature type="binding site" description="axial binding residue" evidence="1">
    <location>
        <position position="21"/>
    </location>
    <ligand>
        <name>heme</name>
        <dbReference type="ChEBI" id="CHEBI:30413"/>
        <note>ligand shared with alpha subunit</note>
    </ligand>
    <ligandPart>
        <name>Fe</name>
        <dbReference type="ChEBI" id="CHEBI:18248"/>
    </ligandPart>
</feature>
<comment type="function">
    <text evidence="1">This b-type cytochrome is tightly associated with the reaction center of photosystem II (PSII). PSII is a light-driven water:plastoquinone oxidoreductase that uses light energy to abstract electrons from H(2)O, generating O(2) and a proton gradient subsequently used for ATP formation. It consists of a core antenna complex that captures photons, and an electron transfer chain that converts photonic excitation into a charge separation.</text>
</comment>
<comment type="cofactor">
    <cofactor evidence="1">
        <name>heme b</name>
        <dbReference type="ChEBI" id="CHEBI:60344"/>
    </cofactor>
    <text evidence="1">With its partner (PsbE) binds heme. PSII binds additional chlorophylls, carotenoids and specific lipids.</text>
</comment>
<comment type="subunit">
    <text evidence="1">Heterodimer of an alpha subunit and a beta subunit. PSII is composed of 1 copy each of membrane proteins PsbA, PsbB, PsbC, PsbD, PsbE, PsbF, PsbH, PsbI, PsbJ, PsbK, PsbL, PsbM, PsbT, PsbX, PsbY, PsbZ, Psb30/Ycf12, at least 3 peripheral proteins of the oxygen-evolving complex and a large number of cofactors. It forms dimeric complexes.</text>
</comment>
<comment type="subcellular location">
    <subcellularLocation>
        <location evidence="1">Plastid</location>
        <location evidence="1">Cyanelle thylakoid membrane</location>
        <topology evidence="1">Single-pass membrane protein</topology>
    </subcellularLocation>
</comment>
<comment type="similarity">
    <text evidence="1">Belongs to the PsbE/PsbF family.</text>
</comment>